<accession>B4T842</accession>
<sequence length="610" mass="67955">MSEIFDAKAFLKTVTSQPGVYRMYDAGGAVIYVGKAKDLKKRLSSYFRSNLASRKTEALVAQIQHIDVTVTHTETEALLLEHNYIKLYQPRYNVLLRDDKSYPFIFLSGDTHPRLAMHRGAKHAKGEYFGPFPNGYAVRETLALLQKIFPVRQCENSVYRNRSRPCLQYQIGRCLGPCVAGLVGEEEYAQQVEYVRLFLSGKDDQVLTQLIARMEKASQDLAFEEAARIRDQIQAVRRVTEKQFVSNAGDDLDVIGVAFDAGMACVHVLFIRQGKVLGSRSYFPKVPGGTELGEVVETFVGQFYLQGSQMRTLPGEILLDFNLSDKTLLADSLSELAGRRIHVQTKPRGDRARYLKLARTNAATALITKLSQQSTITQRLTALAAVLKLPAIKRMECFDISHTMGEQTVASCVVFDANGPLRAEYRRYNIAGITPGDDYAAMNQVLRRRYGKAIEESKIPDVILIDGGKGQLAQAKAVFAELDVPWDKHHPLLLGVAKGADRKAGLETLFFEPEGEGFSLPPDSPALHVIQHIRDESHDHAIGGHRKKRAKVKNTSTLETIEGVGPKRRQMLLKYMGGLQGLRNASVEEIAKVPGISQGLAEKIFWSLKH</sequence>
<keyword id="KW-0963">Cytoplasm</keyword>
<keyword id="KW-0227">DNA damage</keyword>
<keyword id="KW-0228">DNA excision</keyword>
<keyword id="KW-0234">DNA repair</keyword>
<keyword id="KW-0267">Excision nuclease</keyword>
<keyword id="KW-0742">SOS response</keyword>
<proteinExistence type="inferred from homology"/>
<gene>
    <name evidence="1" type="primary">uvrC</name>
    <name type="ordered locus">SeHA_C2161</name>
</gene>
<name>UVRC_SALHS</name>
<protein>
    <recommendedName>
        <fullName evidence="1">UvrABC system protein C</fullName>
        <shortName evidence="1">Protein UvrC</shortName>
    </recommendedName>
    <alternativeName>
        <fullName evidence="1">Excinuclease ABC subunit C</fullName>
    </alternativeName>
</protein>
<feature type="chain" id="PRO_1000099515" description="UvrABC system protein C">
    <location>
        <begin position="1"/>
        <end position="610"/>
    </location>
</feature>
<feature type="domain" description="GIY-YIG" evidence="1">
    <location>
        <begin position="16"/>
        <end position="94"/>
    </location>
</feature>
<feature type="domain" description="UVR" evidence="1">
    <location>
        <begin position="204"/>
        <end position="239"/>
    </location>
</feature>
<dbReference type="EMBL" id="CP001120">
    <property type="protein sequence ID" value="ACF70161.1"/>
    <property type="molecule type" value="Genomic_DNA"/>
</dbReference>
<dbReference type="RefSeq" id="WP_001289456.1">
    <property type="nucleotide sequence ID" value="NC_011083.1"/>
</dbReference>
<dbReference type="SMR" id="B4T842"/>
<dbReference type="KEGG" id="seh:SeHA_C2161"/>
<dbReference type="HOGENOM" id="CLU_014841_3_0_6"/>
<dbReference type="Proteomes" id="UP000001866">
    <property type="component" value="Chromosome"/>
</dbReference>
<dbReference type="GO" id="GO:0005737">
    <property type="term" value="C:cytoplasm"/>
    <property type="evidence" value="ECO:0007669"/>
    <property type="project" value="UniProtKB-SubCell"/>
</dbReference>
<dbReference type="GO" id="GO:0009380">
    <property type="term" value="C:excinuclease repair complex"/>
    <property type="evidence" value="ECO:0007669"/>
    <property type="project" value="InterPro"/>
</dbReference>
<dbReference type="GO" id="GO:0003677">
    <property type="term" value="F:DNA binding"/>
    <property type="evidence" value="ECO:0007669"/>
    <property type="project" value="UniProtKB-UniRule"/>
</dbReference>
<dbReference type="GO" id="GO:0009381">
    <property type="term" value="F:excinuclease ABC activity"/>
    <property type="evidence" value="ECO:0007669"/>
    <property type="project" value="UniProtKB-UniRule"/>
</dbReference>
<dbReference type="GO" id="GO:0006289">
    <property type="term" value="P:nucleotide-excision repair"/>
    <property type="evidence" value="ECO:0007669"/>
    <property type="project" value="UniProtKB-UniRule"/>
</dbReference>
<dbReference type="GO" id="GO:0009432">
    <property type="term" value="P:SOS response"/>
    <property type="evidence" value="ECO:0007669"/>
    <property type="project" value="UniProtKB-UniRule"/>
</dbReference>
<dbReference type="CDD" id="cd10434">
    <property type="entry name" value="GIY-YIG_UvrC_Cho"/>
    <property type="match status" value="1"/>
</dbReference>
<dbReference type="FunFam" id="1.10.150.20:FF:000005">
    <property type="entry name" value="UvrABC system protein C"/>
    <property type="match status" value="1"/>
</dbReference>
<dbReference type="FunFam" id="3.30.420.340:FF:000001">
    <property type="entry name" value="UvrABC system protein C"/>
    <property type="match status" value="1"/>
</dbReference>
<dbReference type="FunFam" id="3.40.1440.10:FF:000001">
    <property type="entry name" value="UvrABC system protein C"/>
    <property type="match status" value="1"/>
</dbReference>
<dbReference type="FunFam" id="4.10.860.10:FF:000002">
    <property type="entry name" value="UvrABC system protein C"/>
    <property type="match status" value="1"/>
</dbReference>
<dbReference type="Gene3D" id="1.10.150.20">
    <property type="entry name" value="5' to 3' exonuclease, C-terminal subdomain"/>
    <property type="match status" value="1"/>
</dbReference>
<dbReference type="Gene3D" id="3.40.1440.10">
    <property type="entry name" value="GIY-YIG endonuclease"/>
    <property type="match status" value="1"/>
</dbReference>
<dbReference type="Gene3D" id="4.10.860.10">
    <property type="entry name" value="UVR domain"/>
    <property type="match status" value="1"/>
</dbReference>
<dbReference type="Gene3D" id="3.30.420.340">
    <property type="entry name" value="UvrC, RNAse H endonuclease domain"/>
    <property type="match status" value="1"/>
</dbReference>
<dbReference type="HAMAP" id="MF_00203">
    <property type="entry name" value="UvrC"/>
    <property type="match status" value="1"/>
</dbReference>
<dbReference type="InterPro" id="IPR000305">
    <property type="entry name" value="GIY-YIG_endonuc"/>
</dbReference>
<dbReference type="InterPro" id="IPR035901">
    <property type="entry name" value="GIY-YIG_endonuc_sf"/>
</dbReference>
<dbReference type="InterPro" id="IPR047296">
    <property type="entry name" value="GIY-YIG_UvrC_Cho"/>
</dbReference>
<dbReference type="InterPro" id="IPR003583">
    <property type="entry name" value="Hlx-hairpin-Hlx_DNA-bd_motif"/>
</dbReference>
<dbReference type="InterPro" id="IPR010994">
    <property type="entry name" value="RuvA_2-like"/>
</dbReference>
<dbReference type="InterPro" id="IPR001943">
    <property type="entry name" value="UVR_dom"/>
</dbReference>
<dbReference type="InterPro" id="IPR036876">
    <property type="entry name" value="UVR_dom_sf"/>
</dbReference>
<dbReference type="InterPro" id="IPR050066">
    <property type="entry name" value="UvrABC_protein_C"/>
</dbReference>
<dbReference type="InterPro" id="IPR004791">
    <property type="entry name" value="UvrC"/>
</dbReference>
<dbReference type="InterPro" id="IPR001162">
    <property type="entry name" value="UvrC_RNase_H_dom"/>
</dbReference>
<dbReference type="InterPro" id="IPR038476">
    <property type="entry name" value="UvrC_RNase_H_dom_sf"/>
</dbReference>
<dbReference type="NCBIfam" id="NF001824">
    <property type="entry name" value="PRK00558.1-5"/>
    <property type="match status" value="1"/>
</dbReference>
<dbReference type="NCBIfam" id="TIGR00194">
    <property type="entry name" value="uvrC"/>
    <property type="match status" value="1"/>
</dbReference>
<dbReference type="PANTHER" id="PTHR30562:SF1">
    <property type="entry name" value="UVRABC SYSTEM PROTEIN C"/>
    <property type="match status" value="1"/>
</dbReference>
<dbReference type="PANTHER" id="PTHR30562">
    <property type="entry name" value="UVRC/OXIDOREDUCTASE"/>
    <property type="match status" value="1"/>
</dbReference>
<dbReference type="Pfam" id="PF01541">
    <property type="entry name" value="GIY-YIG"/>
    <property type="match status" value="1"/>
</dbReference>
<dbReference type="Pfam" id="PF14520">
    <property type="entry name" value="HHH_5"/>
    <property type="match status" value="1"/>
</dbReference>
<dbReference type="Pfam" id="PF02151">
    <property type="entry name" value="UVR"/>
    <property type="match status" value="1"/>
</dbReference>
<dbReference type="Pfam" id="PF22920">
    <property type="entry name" value="UvrC_RNaseH"/>
    <property type="match status" value="1"/>
</dbReference>
<dbReference type="Pfam" id="PF08459">
    <property type="entry name" value="UvrC_RNaseH_dom"/>
    <property type="match status" value="1"/>
</dbReference>
<dbReference type="SMART" id="SM00465">
    <property type="entry name" value="GIYc"/>
    <property type="match status" value="1"/>
</dbReference>
<dbReference type="SMART" id="SM00278">
    <property type="entry name" value="HhH1"/>
    <property type="match status" value="2"/>
</dbReference>
<dbReference type="SUPFAM" id="SSF46600">
    <property type="entry name" value="C-terminal UvrC-binding domain of UvrB"/>
    <property type="match status" value="1"/>
</dbReference>
<dbReference type="SUPFAM" id="SSF82771">
    <property type="entry name" value="GIY-YIG endonuclease"/>
    <property type="match status" value="1"/>
</dbReference>
<dbReference type="SUPFAM" id="SSF47781">
    <property type="entry name" value="RuvA domain 2-like"/>
    <property type="match status" value="1"/>
</dbReference>
<dbReference type="PROSITE" id="PS50164">
    <property type="entry name" value="GIY_YIG"/>
    <property type="match status" value="1"/>
</dbReference>
<dbReference type="PROSITE" id="PS50151">
    <property type="entry name" value="UVR"/>
    <property type="match status" value="1"/>
</dbReference>
<dbReference type="PROSITE" id="PS50165">
    <property type="entry name" value="UVRC"/>
    <property type="match status" value="1"/>
</dbReference>
<reference key="1">
    <citation type="journal article" date="2011" name="J. Bacteriol.">
        <title>Comparative genomics of 28 Salmonella enterica isolates: evidence for CRISPR-mediated adaptive sublineage evolution.</title>
        <authorList>
            <person name="Fricke W.F."/>
            <person name="Mammel M.K."/>
            <person name="McDermott P.F."/>
            <person name="Tartera C."/>
            <person name="White D.G."/>
            <person name="Leclerc J.E."/>
            <person name="Ravel J."/>
            <person name="Cebula T.A."/>
        </authorList>
    </citation>
    <scope>NUCLEOTIDE SEQUENCE [LARGE SCALE GENOMIC DNA]</scope>
    <source>
        <strain>SL476</strain>
    </source>
</reference>
<evidence type="ECO:0000255" key="1">
    <source>
        <dbReference type="HAMAP-Rule" id="MF_00203"/>
    </source>
</evidence>
<comment type="function">
    <text evidence="1">The UvrABC repair system catalyzes the recognition and processing of DNA lesions. UvrC both incises the 5' and 3' sides of the lesion. The N-terminal half is responsible for the 3' incision and the C-terminal half is responsible for the 5' incision.</text>
</comment>
<comment type="subunit">
    <text evidence="1">Interacts with UvrB in an incision complex.</text>
</comment>
<comment type="subcellular location">
    <subcellularLocation>
        <location evidence="1">Cytoplasm</location>
    </subcellularLocation>
</comment>
<comment type="similarity">
    <text evidence="1">Belongs to the UvrC family.</text>
</comment>
<organism>
    <name type="scientific">Salmonella heidelberg (strain SL476)</name>
    <dbReference type="NCBI Taxonomy" id="454169"/>
    <lineage>
        <taxon>Bacteria</taxon>
        <taxon>Pseudomonadati</taxon>
        <taxon>Pseudomonadota</taxon>
        <taxon>Gammaproteobacteria</taxon>
        <taxon>Enterobacterales</taxon>
        <taxon>Enterobacteriaceae</taxon>
        <taxon>Salmonella</taxon>
    </lineage>
</organism>